<gene>
    <name type="primary">rbcL</name>
</gene>
<protein>
    <recommendedName>
        <fullName>Ribulose bisphosphate carboxylase large chain</fullName>
        <shortName>RuBisCO large subunit</shortName>
        <ecNumber>4.1.1.39</ecNumber>
    </recommendedName>
</protein>
<geneLocation type="chloroplast"/>
<proteinExistence type="inferred from homology"/>
<feature type="chain" id="PRO_0000277427" description="Ribulose bisphosphate carboxylase large chain">
    <location>
        <begin position="1"/>
        <end position="488"/>
    </location>
</feature>
<feature type="active site" description="Proton acceptor" evidence="1">
    <location>
        <position position="179"/>
    </location>
</feature>
<feature type="active site" description="Proton acceptor" evidence="1">
    <location>
        <position position="297"/>
    </location>
</feature>
<feature type="binding site" description="in homodimeric partner" evidence="1">
    <location>
        <position position="127"/>
    </location>
    <ligand>
        <name>substrate</name>
    </ligand>
</feature>
<feature type="binding site" evidence="1">
    <location>
        <position position="177"/>
    </location>
    <ligand>
        <name>substrate</name>
    </ligand>
</feature>
<feature type="binding site" evidence="1">
    <location>
        <position position="181"/>
    </location>
    <ligand>
        <name>substrate</name>
    </ligand>
</feature>
<feature type="binding site" description="via carbamate group" evidence="1">
    <location>
        <position position="205"/>
    </location>
    <ligand>
        <name>Mg(2+)</name>
        <dbReference type="ChEBI" id="CHEBI:18420"/>
    </ligand>
</feature>
<feature type="binding site" evidence="1">
    <location>
        <position position="207"/>
    </location>
    <ligand>
        <name>Mg(2+)</name>
        <dbReference type="ChEBI" id="CHEBI:18420"/>
    </ligand>
</feature>
<feature type="binding site" evidence="1">
    <location>
        <position position="208"/>
    </location>
    <ligand>
        <name>Mg(2+)</name>
        <dbReference type="ChEBI" id="CHEBI:18420"/>
    </ligand>
</feature>
<feature type="binding site" evidence="1">
    <location>
        <position position="298"/>
    </location>
    <ligand>
        <name>substrate</name>
    </ligand>
</feature>
<feature type="binding site" evidence="1">
    <location>
        <position position="330"/>
    </location>
    <ligand>
        <name>substrate</name>
    </ligand>
</feature>
<feature type="binding site" evidence="1">
    <location>
        <position position="382"/>
    </location>
    <ligand>
        <name>substrate</name>
    </ligand>
</feature>
<feature type="site" description="Transition state stabilizer" evidence="1">
    <location>
        <position position="337"/>
    </location>
</feature>
<feature type="modified residue" description="N6-carboxylysine" evidence="1">
    <location>
        <position position="205"/>
    </location>
</feature>
<sequence>MSQSVESRTRIKSERYESGVIPYAKMGYWDADYVIKETDILALFRITPQPGVDPIEASAAIAGESSTATWTVVWTDLLTACDLYRAKAYRVDPVPNVADQYFAYIAYDIDLFEEGSIANLTASIIGNVFGFKAVKALRLEDMRMPVAYLKTFQGPATGLIVERERMDKFGRPFLGATVKPKLGLSGKNYGRVVYEGLKGGLDFLKDDENINSQPFMRWRERFLYSMEGVNKASASAGEIKGHYLNVTAATMEDMYERAEFSKEVGSIICMIDLVIGYTAIQSMAIWARKHDMILHLHRAGNSTYSRQKNHGMNFRVICKWMRMAGVDHIHAGTVVGKLEGDPLMIKGFYNTLLESETDINLPQGLFFAQNWASLRKVVPVASGGIHAGQMHQLLDYLGDDVVLQFGGGTIGHPDGIQAGATANRVALESMVMARNEGRNYVAEGPQILRDAAKTCGPLQTALDLWKDISFNYTSTDTADFVETPTANI</sequence>
<accession>Q760S7</accession>
<reference key="1">
    <citation type="submission" date="2003-08" db="EMBL/GenBank/DDBJ databases">
        <title>Species determination utilizing Porphyra (Rhodophyta) plastid DNA RuBisCo sequences.</title>
        <authorList>
            <person name="Kito H."/>
            <person name="Kunimoto M."/>
            <person name="Mizukami Y."/>
            <person name="Murase N."/>
            <person name="Kuroki T."/>
            <person name="Taruta M."/>
            <person name="Levine I."/>
        </authorList>
    </citation>
    <scope>NUCLEOTIDE SEQUENCE [GENOMIC DNA]</scope>
    <source>
        <tissue>Thallus</tissue>
    </source>
</reference>
<dbReference type="EC" id="4.1.1.39"/>
<dbReference type="EMBL" id="AB118579">
    <property type="protein sequence ID" value="BAC84925.1"/>
    <property type="molecule type" value="Genomic_DNA"/>
</dbReference>
<dbReference type="SMR" id="Q760S7"/>
<dbReference type="GO" id="GO:0009507">
    <property type="term" value="C:chloroplast"/>
    <property type="evidence" value="ECO:0007669"/>
    <property type="project" value="UniProtKB-SubCell"/>
</dbReference>
<dbReference type="GO" id="GO:0000287">
    <property type="term" value="F:magnesium ion binding"/>
    <property type="evidence" value="ECO:0007669"/>
    <property type="project" value="UniProtKB-UniRule"/>
</dbReference>
<dbReference type="GO" id="GO:0004497">
    <property type="term" value="F:monooxygenase activity"/>
    <property type="evidence" value="ECO:0007669"/>
    <property type="project" value="UniProtKB-KW"/>
</dbReference>
<dbReference type="GO" id="GO:0016984">
    <property type="term" value="F:ribulose-bisphosphate carboxylase activity"/>
    <property type="evidence" value="ECO:0007669"/>
    <property type="project" value="UniProtKB-UniRule"/>
</dbReference>
<dbReference type="GO" id="GO:0019253">
    <property type="term" value="P:reductive pentose-phosphate cycle"/>
    <property type="evidence" value="ECO:0007669"/>
    <property type="project" value="UniProtKB-UniRule"/>
</dbReference>
<dbReference type="CDD" id="cd08212">
    <property type="entry name" value="RuBisCO_large_I"/>
    <property type="match status" value="1"/>
</dbReference>
<dbReference type="Gene3D" id="3.20.20.110">
    <property type="entry name" value="Ribulose bisphosphate carboxylase, large subunit, C-terminal domain"/>
    <property type="match status" value="1"/>
</dbReference>
<dbReference type="Gene3D" id="3.30.70.150">
    <property type="entry name" value="RuBisCO large subunit, N-terminal domain"/>
    <property type="match status" value="1"/>
</dbReference>
<dbReference type="HAMAP" id="MF_01338">
    <property type="entry name" value="RuBisCO_L_type1"/>
    <property type="match status" value="1"/>
</dbReference>
<dbReference type="InterPro" id="IPR033966">
    <property type="entry name" value="RuBisCO"/>
</dbReference>
<dbReference type="InterPro" id="IPR020878">
    <property type="entry name" value="RuBisCo_large_chain_AS"/>
</dbReference>
<dbReference type="InterPro" id="IPR000685">
    <property type="entry name" value="RuBisCO_lsu_C"/>
</dbReference>
<dbReference type="InterPro" id="IPR036376">
    <property type="entry name" value="RuBisCO_lsu_C_sf"/>
</dbReference>
<dbReference type="InterPro" id="IPR017443">
    <property type="entry name" value="RuBisCO_lsu_fd_N"/>
</dbReference>
<dbReference type="InterPro" id="IPR036422">
    <property type="entry name" value="RuBisCO_lsu_N_sf"/>
</dbReference>
<dbReference type="InterPro" id="IPR020888">
    <property type="entry name" value="RuBisCO_lsuI"/>
</dbReference>
<dbReference type="NCBIfam" id="NF003252">
    <property type="entry name" value="PRK04208.1"/>
    <property type="match status" value="1"/>
</dbReference>
<dbReference type="PANTHER" id="PTHR42704">
    <property type="entry name" value="RIBULOSE BISPHOSPHATE CARBOXYLASE"/>
    <property type="match status" value="1"/>
</dbReference>
<dbReference type="PANTHER" id="PTHR42704:SF17">
    <property type="entry name" value="RIBULOSE BISPHOSPHATE CARBOXYLASE LARGE CHAIN"/>
    <property type="match status" value="1"/>
</dbReference>
<dbReference type="Pfam" id="PF00016">
    <property type="entry name" value="RuBisCO_large"/>
    <property type="match status" value="1"/>
</dbReference>
<dbReference type="Pfam" id="PF02788">
    <property type="entry name" value="RuBisCO_large_N"/>
    <property type="match status" value="1"/>
</dbReference>
<dbReference type="SFLD" id="SFLDG01052">
    <property type="entry name" value="RuBisCO"/>
    <property type="match status" value="1"/>
</dbReference>
<dbReference type="SFLD" id="SFLDS00014">
    <property type="entry name" value="RuBisCO"/>
    <property type="match status" value="1"/>
</dbReference>
<dbReference type="SFLD" id="SFLDG00301">
    <property type="entry name" value="RuBisCO-like_proteins"/>
    <property type="match status" value="1"/>
</dbReference>
<dbReference type="SUPFAM" id="SSF51649">
    <property type="entry name" value="RuBisCo, C-terminal domain"/>
    <property type="match status" value="1"/>
</dbReference>
<dbReference type="SUPFAM" id="SSF54966">
    <property type="entry name" value="RuBisCO, large subunit, small (N-terminal) domain"/>
    <property type="match status" value="1"/>
</dbReference>
<dbReference type="PROSITE" id="PS00157">
    <property type="entry name" value="RUBISCO_LARGE"/>
    <property type="match status" value="1"/>
</dbReference>
<keyword id="KW-0113">Calvin cycle</keyword>
<keyword id="KW-0120">Carbon dioxide fixation</keyword>
<keyword id="KW-0150">Chloroplast</keyword>
<keyword id="KW-0456">Lyase</keyword>
<keyword id="KW-0460">Magnesium</keyword>
<keyword id="KW-0479">Metal-binding</keyword>
<keyword id="KW-0503">Monooxygenase</keyword>
<keyword id="KW-0560">Oxidoreductase</keyword>
<keyword id="KW-0601">Photorespiration</keyword>
<keyword id="KW-0602">Photosynthesis</keyword>
<keyword id="KW-0934">Plastid</keyword>
<organism>
    <name type="scientific">Pyropia dentata</name>
    <name type="common">Red alga</name>
    <name type="synonym">Neoporphyra dentata</name>
    <dbReference type="NCBI Taxonomy" id="76160"/>
    <lineage>
        <taxon>Eukaryota</taxon>
        <taxon>Rhodophyta</taxon>
        <taxon>Bangiophyceae</taxon>
        <taxon>Bangiales</taxon>
        <taxon>Bangiaceae</taxon>
        <taxon>Pyropia</taxon>
    </lineage>
</organism>
<evidence type="ECO:0000250" key="1"/>
<evidence type="ECO:0000305" key="2"/>
<name>RBL_PYRDN</name>
<comment type="function">
    <text evidence="1">RuBisCO catalyzes two reactions: the carboxylation of D-ribulose 1,5-bisphosphate, the primary event in carbon dioxide fixation, as well as the oxidative fragmentation of the pentose substrate in the photorespiration process. Both reactions occur simultaneously and in competition at the same active site (By similarity).</text>
</comment>
<comment type="catalytic activity">
    <reaction>
        <text>2 (2R)-3-phosphoglycerate + 2 H(+) = D-ribulose 1,5-bisphosphate + CO2 + H2O</text>
        <dbReference type="Rhea" id="RHEA:23124"/>
        <dbReference type="ChEBI" id="CHEBI:15377"/>
        <dbReference type="ChEBI" id="CHEBI:15378"/>
        <dbReference type="ChEBI" id="CHEBI:16526"/>
        <dbReference type="ChEBI" id="CHEBI:57870"/>
        <dbReference type="ChEBI" id="CHEBI:58272"/>
        <dbReference type="EC" id="4.1.1.39"/>
    </reaction>
</comment>
<comment type="catalytic activity">
    <reaction>
        <text>D-ribulose 1,5-bisphosphate + O2 = 2-phosphoglycolate + (2R)-3-phosphoglycerate + 2 H(+)</text>
        <dbReference type="Rhea" id="RHEA:36631"/>
        <dbReference type="ChEBI" id="CHEBI:15378"/>
        <dbReference type="ChEBI" id="CHEBI:15379"/>
        <dbReference type="ChEBI" id="CHEBI:57870"/>
        <dbReference type="ChEBI" id="CHEBI:58033"/>
        <dbReference type="ChEBI" id="CHEBI:58272"/>
    </reaction>
</comment>
<comment type="cofactor">
    <cofactor evidence="1">
        <name>Mg(2+)</name>
        <dbReference type="ChEBI" id="CHEBI:18420"/>
    </cofactor>
    <text evidence="1">Binds 1 Mg(2+) ion per subunit.</text>
</comment>
<comment type="subunit">
    <text evidence="1">Heterohexadecamer of 8 large chains and 8 small chains.</text>
</comment>
<comment type="subcellular location">
    <subcellularLocation>
        <location>Plastid</location>
        <location>Chloroplast</location>
    </subcellularLocation>
</comment>
<comment type="miscellaneous">
    <text evidence="1">The basic functional RuBisCO is composed of a large chain homodimer in a 'head-to-tail' conformation. In form I RuBisCO this homodimer is arranged in a barrel-like tetramer with the small subunits forming a tetrameric 'cap' on each end of the 'barrel' (By similarity).</text>
</comment>
<comment type="similarity">
    <text evidence="2">Belongs to the RuBisCO large chain family. Type I subfamily.</text>
</comment>